<name>SP2AA_GEOSE</name>
<proteinExistence type="evidence at protein level"/>
<dbReference type="EMBL" id="L47360">
    <property type="protein sequence ID" value="AAB81192.1"/>
    <property type="molecule type" value="Genomic_DNA"/>
</dbReference>
<dbReference type="PDB" id="1TH8">
    <property type="method" value="X-ray"/>
    <property type="resolution" value="2.40 A"/>
    <property type="chains" value="B=1-116"/>
</dbReference>
<dbReference type="PDB" id="1THN">
    <property type="method" value="X-ray"/>
    <property type="resolution" value="2.50 A"/>
    <property type="chains" value="B/D=1-116"/>
</dbReference>
<dbReference type="PDB" id="1TID">
    <property type="method" value="X-ray"/>
    <property type="resolution" value="2.50 A"/>
    <property type="chains" value="B/D=1-116"/>
</dbReference>
<dbReference type="PDB" id="1TIL">
    <property type="method" value="X-ray"/>
    <property type="resolution" value="2.70 A"/>
    <property type="chains" value="B/D/F=1-116"/>
</dbReference>
<dbReference type="PDBsum" id="1TH8"/>
<dbReference type="PDBsum" id="1THN"/>
<dbReference type="PDBsum" id="1TID"/>
<dbReference type="PDBsum" id="1TIL"/>
<dbReference type="SMR" id="O32726"/>
<dbReference type="IntAct" id="O32726">
    <property type="interactions" value="1"/>
</dbReference>
<dbReference type="EvolutionaryTrace" id="O32726"/>
<dbReference type="GO" id="GO:0043856">
    <property type="term" value="F:anti-sigma factor antagonist activity"/>
    <property type="evidence" value="ECO:0007669"/>
    <property type="project" value="InterPro"/>
</dbReference>
<dbReference type="GO" id="GO:0045152">
    <property type="term" value="F:antisigma factor binding"/>
    <property type="evidence" value="ECO:0007669"/>
    <property type="project" value="InterPro"/>
</dbReference>
<dbReference type="GO" id="GO:0030435">
    <property type="term" value="P:sporulation resulting in formation of a cellular spore"/>
    <property type="evidence" value="ECO:0007669"/>
    <property type="project" value="UniProtKB-KW"/>
</dbReference>
<dbReference type="CDD" id="cd06844">
    <property type="entry name" value="STAS"/>
    <property type="match status" value="1"/>
</dbReference>
<dbReference type="Gene3D" id="3.30.750.24">
    <property type="entry name" value="STAS domain"/>
    <property type="match status" value="1"/>
</dbReference>
<dbReference type="InterPro" id="IPR003658">
    <property type="entry name" value="Anti-sigma_ant"/>
</dbReference>
<dbReference type="InterPro" id="IPR014237">
    <property type="entry name" value="Anti-sigma_F_ant"/>
</dbReference>
<dbReference type="InterPro" id="IPR002645">
    <property type="entry name" value="STAS_dom"/>
</dbReference>
<dbReference type="InterPro" id="IPR036513">
    <property type="entry name" value="STAS_dom_sf"/>
</dbReference>
<dbReference type="NCBIfam" id="TIGR00377">
    <property type="entry name" value="ant_ant_sig"/>
    <property type="match status" value="1"/>
</dbReference>
<dbReference type="NCBIfam" id="TIGR02886">
    <property type="entry name" value="spore_II_AA"/>
    <property type="match status" value="1"/>
</dbReference>
<dbReference type="PANTHER" id="PTHR33495:SF2">
    <property type="entry name" value="ANTI-SIGMA FACTOR ANTAGONIST TM_1081-RELATED"/>
    <property type="match status" value="1"/>
</dbReference>
<dbReference type="PANTHER" id="PTHR33495">
    <property type="entry name" value="ANTI-SIGMA FACTOR ANTAGONIST TM_1081-RELATED-RELATED"/>
    <property type="match status" value="1"/>
</dbReference>
<dbReference type="Pfam" id="PF01740">
    <property type="entry name" value="STAS"/>
    <property type="match status" value="1"/>
</dbReference>
<dbReference type="SUPFAM" id="SSF52091">
    <property type="entry name" value="SpoIIaa-like"/>
    <property type="match status" value="1"/>
</dbReference>
<dbReference type="PROSITE" id="PS50801">
    <property type="entry name" value="STAS"/>
    <property type="match status" value="1"/>
</dbReference>
<sequence>MSLAIDLEVKQDELIVRLSGELDHHTAENCMNKCRMCLEKRAIRHIVLNLGQLTFMDSSGLGVILGRYKQIKNVGGQMVVCAVSPAVKRLFDMSGLFKIIRVEADEQFALQALGVA</sequence>
<feature type="chain" id="PRO_0000194203" description="Anti-sigma F factor antagonist">
    <location>
        <begin position="1"/>
        <end position="116"/>
    </location>
</feature>
<feature type="domain" description="STAS" evidence="2">
    <location>
        <begin position="3"/>
        <end position="113"/>
    </location>
</feature>
<feature type="modified residue" description="Phosphoserine" evidence="1">
    <location>
        <position position="58"/>
    </location>
</feature>
<feature type="strand" evidence="4">
    <location>
        <begin position="3"/>
        <end position="10"/>
    </location>
</feature>
<feature type="strand" evidence="4">
    <location>
        <begin position="13"/>
        <end position="23"/>
    </location>
</feature>
<feature type="helix" evidence="4">
    <location>
        <begin position="24"/>
        <end position="39"/>
    </location>
</feature>
<feature type="strand" evidence="4">
    <location>
        <begin position="45"/>
        <end position="56"/>
    </location>
</feature>
<feature type="helix" evidence="4">
    <location>
        <begin position="58"/>
        <end position="73"/>
    </location>
</feature>
<feature type="strand" evidence="4">
    <location>
        <begin position="78"/>
        <end position="82"/>
    </location>
</feature>
<feature type="helix" evidence="4">
    <location>
        <begin position="85"/>
        <end position="93"/>
    </location>
</feature>
<feature type="helix" evidence="4">
    <location>
        <begin position="96"/>
        <end position="98"/>
    </location>
</feature>
<feature type="strand" evidence="4">
    <location>
        <begin position="100"/>
        <end position="105"/>
    </location>
</feature>
<feature type="helix" evidence="4">
    <location>
        <begin position="106"/>
        <end position="112"/>
    </location>
</feature>
<evidence type="ECO:0000250" key="1"/>
<evidence type="ECO:0000255" key="2">
    <source>
        <dbReference type="PROSITE-ProRule" id="PRU00198"/>
    </source>
</evidence>
<evidence type="ECO:0000305" key="3"/>
<evidence type="ECO:0007829" key="4">
    <source>
        <dbReference type="PDB" id="1TH8"/>
    </source>
</evidence>
<protein>
    <recommendedName>
        <fullName>Anti-sigma F factor antagonist</fullName>
    </recommendedName>
    <alternativeName>
        <fullName>Stage II sporulation protein AA</fullName>
    </alternativeName>
</protein>
<gene>
    <name type="primary">spoIIAA</name>
</gene>
<organism>
    <name type="scientific">Geobacillus stearothermophilus</name>
    <name type="common">Bacillus stearothermophilus</name>
    <dbReference type="NCBI Taxonomy" id="1422"/>
    <lineage>
        <taxon>Bacteria</taxon>
        <taxon>Bacillati</taxon>
        <taxon>Bacillota</taxon>
        <taxon>Bacilli</taxon>
        <taxon>Bacillales</taxon>
        <taxon>Anoxybacillaceae</taxon>
        <taxon>Geobacillus</taxon>
    </lineage>
</organism>
<accession>O32726</accession>
<reference key="1">
    <citation type="journal article" date="1997" name="Gene">
        <title>Sequencing and phylogenetic analysis of the spoIIA operon from diverse Bacillus and Paenibacillus species.</title>
        <authorList>
            <person name="Park S.G."/>
            <person name="Yudkin M.D."/>
        </authorList>
    </citation>
    <scope>NUCLEOTIDE SEQUENCE [GENOMIC DNA]</scope>
    <source>
        <strain>ATCC 12980 / DSM 22 / CCM 2062 / JCM 2501 / NBRC 12550 / NCIMB 8923 / NCTC 10339 / R-35646 / VKM B-510</strain>
    </source>
</reference>
<keyword id="KW-0002">3D-structure</keyword>
<keyword id="KW-0597">Phosphoprotein</keyword>
<keyword id="KW-0749">Sporulation</keyword>
<comment type="function">
    <text evidence="1">In the phosphorylated form it could act as an anti-anti-sigma factor that counteracts SpoIIAB and thus releases sigma f from inhibition.</text>
</comment>
<comment type="interaction">
    <interactant intactId="EBI-1039369">
        <id>O32726</id>
    </interactant>
    <interactant intactId="EBI-1033242">
        <id>O32727</id>
        <label>spoIIAB</label>
    </interactant>
    <organismsDiffer>false</organismsDiffer>
    <experiments>4</experiments>
</comment>
<comment type="PTM">
    <text evidence="1">Phosphorylated by SpoIIAB on a serine residue.</text>
</comment>
<comment type="similarity">
    <text evidence="3">Belongs to the anti-sigma-factor antagonist family.</text>
</comment>